<sequence length="284" mass="31494">MAIDAQKLVVVIVIVVVPLLFKFIIGPKTKPVLDPKRNDFQSFPLVEKTILTHNTSMYKFGLPHADDVLGLPIGQHIVIKANINGKDITRSYTPTSLDGDTKGNFELLVKSYPTGNVSKMIGELKIGDSIQIKGPRGNYHYERNCRSHLGMIAGGTGIAPMYQIMKAIAMDPHDTTKVSLVFGNVHEEDILLKKELEALVAMKPSQFKIVYYLDSPDREDWTGGVGYITKDVIKEHLPAATMDNVQILICGPPAMVASVRRSTVDLGFRRSKPLSKMEDQVFVF</sequence>
<evidence type="ECO:0000250" key="1"/>
<evidence type="ECO:0000255" key="2"/>
<evidence type="ECO:0000255" key="3">
    <source>
        <dbReference type="PROSITE-ProRule" id="PRU00716"/>
    </source>
</evidence>
<evidence type="ECO:0000269" key="4">
    <source>
    </source>
</evidence>
<evidence type="ECO:0000269" key="5">
    <source>
    </source>
</evidence>
<evidence type="ECO:0000269" key="6">
    <source>
    </source>
</evidence>
<evidence type="ECO:0000269" key="7">
    <source>
    </source>
</evidence>
<evidence type="ECO:0000269" key="8">
    <source>
    </source>
</evidence>
<evidence type="ECO:0000269" key="9">
    <source>
    </source>
</evidence>
<evidence type="ECO:0000269" key="10">
    <source>
    </source>
</evidence>
<evidence type="ECO:0000269" key="11">
    <source>
    </source>
</evidence>
<evidence type="ECO:0000269" key="12">
    <source>
    </source>
</evidence>
<evidence type="ECO:0000303" key="13">
    <source>
    </source>
</evidence>
<evidence type="ECO:0000305" key="14"/>
<evidence type="ECO:0007829" key="15">
    <source>
        <dbReference type="PDB" id="7ROM"/>
    </source>
</evidence>
<proteinExistence type="evidence at protein level"/>
<feature type="chain" id="PRO_0000167627" description="NADH-cytochrome b5 reductase 1">
    <location>
        <begin position="1"/>
        <end position="284"/>
    </location>
</feature>
<feature type="transmembrane region" description="Helical" evidence="2">
    <location>
        <begin position="7"/>
        <end position="27"/>
    </location>
</feature>
<feature type="domain" description="FAD-binding FR-type" evidence="3">
    <location>
        <begin position="38"/>
        <end position="142"/>
    </location>
</feature>
<feature type="binding site" evidence="1">
    <location>
        <begin position="122"/>
        <end position="137"/>
    </location>
    <ligand>
        <name>FAD</name>
        <dbReference type="ChEBI" id="CHEBI:57692"/>
    </ligand>
</feature>
<feature type="binding site" evidence="1">
    <location>
        <begin position="148"/>
        <end position="180"/>
    </location>
    <ligand>
        <name>FAD</name>
        <dbReference type="ChEBI" id="CHEBI:57692"/>
    </ligand>
</feature>
<feature type="strand" evidence="15">
    <location>
        <begin position="41"/>
        <end position="52"/>
    </location>
</feature>
<feature type="strand" evidence="15">
    <location>
        <begin position="55"/>
        <end position="61"/>
    </location>
</feature>
<feature type="strand" evidence="15">
    <location>
        <begin position="76"/>
        <end position="83"/>
    </location>
</feature>
<feature type="strand" evidence="15">
    <location>
        <begin position="86"/>
        <end position="92"/>
    </location>
</feature>
<feature type="turn" evidence="15">
    <location>
        <begin position="98"/>
        <end position="100"/>
    </location>
</feature>
<feature type="strand" evidence="15">
    <location>
        <begin position="103"/>
        <end position="110"/>
    </location>
</feature>
<feature type="helix" evidence="15">
    <location>
        <begin position="117"/>
        <end position="123"/>
    </location>
</feature>
<feature type="strand" evidence="15">
    <location>
        <begin position="129"/>
        <end position="136"/>
    </location>
</feature>
<feature type="strand" evidence="15">
    <location>
        <begin position="145"/>
        <end position="154"/>
    </location>
</feature>
<feature type="helix" evidence="15">
    <location>
        <begin position="155"/>
        <end position="157"/>
    </location>
</feature>
<feature type="helix" evidence="15">
    <location>
        <begin position="158"/>
        <end position="170"/>
    </location>
</feature>
<feature type="strand" evidence="15">
    <location>
        <begin position="177"/>
        <end position="186"/>
    </location>
</feature>
<feature type="helix" evidence="15">
    <location>
        <begin position="187"/>
        <end position="189"/>
    </location>
</feature>
<feature type="helix" evidence="15">
    <location>
        <begin position="193"/>
        <end position="202"/>
    </location>
</feature>
<feature type="turn" evidence="15">
    <location>
        <begin position="204"/>
        <end position="206"/>
    </location>
</feature>
<feature type="strand" evidence="15">
    <location>
        <begin position="207"/>
        <end position="215"/>
    </location>
</feature>
<feature type="strand" evidence="15">
    <location>
        <begin position="223"/>
        <end position="226"/>
    </location>
</feature>
<feature type="helix" evidence="15">
    <location>
        <begin position="230"/>
        <end position="236"/>
    </location>
</feature>
<feature type="strand" evidence="15">
    <location>
        <begin position="245"/>
        <end position="251"/>
    </location>
</feature>
<feature type="helix" evidence="15">
    <location>
        <begin position="253"/>
        <end position="265"/>
    </location>
</feature>
<feature type="strand" evidence="15">
    <location>
        <begin position="279"/>
        <end position="283"/>
    </location>
</feature>
<comment type="function">
    <text evidence="4 6 8 9 10 11">NADH-dependent reductase for KTI11/DPH3 and cytochrome b5 (PubMed:10622712, PubMed:14930, PubMed:27694803, PubMed:31463593, PubMed:34154323). Required for the first step of diphthamide biosynthesis, a post-translational modification of histidine which occurs in elongation factor 2 (PubMed:27694803, PubMed:31463593, PubMed:34154323). DPH1 and DPH2 transfer a 3-amino-3-carboxypropyl (ACP) group from S-adenosyl-L-methionine (SAM) to a histidine residue, the reaction is assisted by a reduction system comprising KTI11/DPH3 and a NADH-dependent reductase, predominantly CBR1 (PubMed:31463593, PubMed:34154323). By reducing KTI11/DPH3, also involved in the formation of the tRNA wobble base modification mcm5s 2U (5-methoxycarbonylmethyl-2-thiouridine), mediated by the elongator complex (PubMed:27694803). The cytochrome b5/NADH cytochrome b5 reductase electron transfer system supports the catalytic activity of several sterol biosynthetic enzymes (PubMed:10622712). Plays a role in bud morphology (PubMed:17895367).</text>
</comment>
<comment type="catalytic activity">
    <reaction evidence="6">
        <text>2 Fe(III)-[cytochrome b5] + NADH = 2 Fe(II)-[cytochrome b5] + NAD(+) + H(+)</text>
        <dbReference type="Rhea" id="RHEA:46680"/>
        <dbReference type="Rhea" id="RHEA-COMP:10438"/>
        <dbReference type="Rhea" id="RHEA-COMP:10439"/>
        <dbReference type="ChEBI" id="CHEBI:15378"/>
        <dbReference type="ChEBI" id="CHEBI:29033"/>
        <dbReference type="ChEBI" id="CHEBI:29034"/>
        <dbReference type="ChEBI" id="CHEBI:57540"/>
        <dbReference type="ChEBI" id="CHEBI:57945"/>
        <dbReference type="EC" id="1.6.2.2"/>
    </reaction>
</comment>
<comment type="catalytic activity">
    <reaction evidence="9">
        <text>2 Fe(3+)-[Dph3] + NADH = 2 Fe(2+)-[Dph3] + NAD(+) + H(+)</text>
        <dbReference type="Rhea" id="RHEA:71231"/>
        <dbReference type="Rhea" id="RHEA-COMP:18002"/>
        <dbReference type="Rhea" id="RHEA-COMP:18003"/>
        <dbReference type="ChEBI" id="CHEBI:15378"/>
        <dbReference type="ChEBI" id="CHEBI:29033"/>
        <dbReference type="ChEBI" id="CHEBI:29034"/>
        <dbReference type="ChEBI" id="CHEBI:57540"/>
        <dbReference type="ChEBI" id="CHEBI:57945"/>
        <dbReference type="ChEBI" id="CHEBI:83228"/>
    </reaction>
    <physiologicalReaction direction="left-to-right" evidence="9">
        <dbReference type="Rhea" id="RHEA:71232"/>
    </physiologicalReaction>
</comment>
<comment type="cofactor">
    <cofactor evidence="2">
        <name>FAD</name>
        <dbReference type="ChEBI" id="CHEBI:57692"/>
    </cofactor>
</comment>
<comment type="activity regulation">
    <text evidence="6 12">Competitively inhibited by NAD(+). Inhibited by mercurials such as p-chloromercuribenzoate (PCMB) and HgCl(2). Enzymatic activity increases under anaerobic conditions.</text>
</comment>
<comment type="biophysicochemical properties">
    <kinetics>
        <KM evidence="6">6.3 uM for NADH</KM>
        <KM evidence="6">0.8 uM for cytochrome b5</KM>
    </kinetics>
    <phDependence>
        <text evidence="6">Optimum pH is 5.6. Active from pH 5 to 7.5.</text>
    </phDependence>
</comment>
<comment type="pathway">
    <text evidence="11">Protein modification; peptidyl-diphthamide biosynthesis.</text>
</comment>
<comment type="subunit">
    <text evidence="6 8 9">Monomer (PubMed:14930). Component of the 2-(3-amino-3-carboxypropyl)histidine synthase complex composed of DPH1, DPH2, KTI11/DPH3 and a NADH-dependent reductase, predominantly CBR1 (PubMed:27694803). Interacts with KTI11/DPH3 (PubMed:27694803). Interacts with STE20 (PubMed:17895367).</text>
</comment>
<comment type="subcellular location">
    <subcellularLocation>
        <location evidence="7">Mitochondrion outer membrane</location>
        <topology evidence="2">Single-pass membrane protein</topology>
    </subcellularLocation>
</comment>
<comment type="induction">
    <text evidence="12">Protein levels are highest during exponential growth phase and lowest in stationary phase.</text>
</comment>
<comment type="disruption phenotype">
    <text evidence="9">Simultaneous disruption of MCR1 results in resistance to diphtheria toxin and zymocin.</text>
</comment>
<comment type="miscellaneous">
    <text evidence="5">Present with 4820 molecules/cell in log phase SD medium.</text>
</comment>
<comment type="similarity">
    <text evidence="14">Belongs to the flavoprotein pyridine nucleotide cytochrome reductase family.</text>
</comment>
<comment type="sequence caution" evidence="14">
    <conflict type="erroneous initiation">
        <sequence resource="EMBL-CDS" id="CAA82214"/>
    </conflict>
</comment>
<comment type="sequence caution" evidence="14">
    <conflict type="erroneous initiation">
        <sequence resource="EMBL-CDS" id="CAA86908"/>
    </conflict>
</comment>
<name>NCB5R_YEAST</name>
<reference key="1">
    <citation type="journal article" date="1994" name="Eur. J. Biochem.">
        <title>Isolation and complete sequence of CBR, a gene encoding a putative cytochrome b reductase in Saccharomyces cerevisiae.</title>
        <authorList>
            <person name="Csukai M."/>
            <person name="Murray M."/>
            <person name="Orr E."/>
        </authorList>
    </citation>
    <scope>NUCLEOTIDE SEQUENCE [GENOMIC DNA]</scope>
    <source>
        <strain>842</strain>
    </source>
</reference>
<reference key="2">
    <citation type="journal article" date="1997" name="Nature">
        <title>The nucleotide sequence of Saccharomyces cerevisiae chromosome IX.</title>
        <authorList>
            <person name="Churcher C.M."/>
            <person name="Bowman S."/>
            <person name="Badcock K."/>
            <person name="Bankier A.T."/>
            <person name="Brown D."/>
            <person name="Chillingworth T."/>
            <person name="Connor R."/>
            <person name="Devlin K."/>
            <person name="Gentles S."/>
            <person name="Hamlin N."/>
            <person name="Harris D.E."/>
            <person name="Horsnell T."/>
            <person name="Hunt S."/>
            <person name="Jagels K."/>
            <person name="Jones M."/>
            <person name="Lye G."/>
            <person name="Moule S."/>
            <person name="Odell C."/>
            <person name="Pearson D."/>
            <person name="Rajandream M.A."/>
            <person name="Rice P."/>
            <person name="Rowley N."/>
            <person name="Skelton J."/>
            <person name="Smith V."/>
            <person name="Walsh S.V."/>
            <person name="Whitehead S."/>
            <person name="Barrell B.G."/>
        </authorList>
    </citation>
    <scope>NUCLEOTIDE SEQUENCE [LARGE SCALE GENOMIC DNA]</scope>
    <source>
        <strain>ATCC 204508 / S288c</strain>
    </source>
</reference>
<reference key="3">
    <citation type="journal article" date="2014" name="G3 (Bethesda)">
        <title>The reference genome sequence of Saccharomyces cerevisiae: Then and now.</title>
        <authorList>
            <person name="Engel S.R."/>
            <person name="Dietrich F.S."/>
            <person name="Fisk D.G."/>
            <person name="Binkley G."/>
            <person name="Balakrishnan R."/>
            <person name="Costanzo M.C."/>
            <person name="Dwight S.S."/>
            <person name="Hitz B.C."/>
            <person name="Karra K."/>
            <person name="Nash R.S."/>
            <person name="Weng S."/>
            <person name="Wong E.D."/>
            <person name="Lloyd P."/>
            <person name="Skrzypek M.S."/>
            <person name="Miyasato S.R."/>
            <person name="Simison M."/>
            <person name="Cherry J.M."/>
        </authorList>
    </citation>
    <scope>GENOME REANNOTATION</scope>
    <source>
        <strain>ATCC 204508 / S288c</strain>
    </source>
</reference>
<reference key="4">
    <citation type="journal article" date="1977" name="J. Biochem.">
        <title>Studies on the microsomal electron-transport system of anaerobically grown yeast. IV. Purification and characterization of NADH-cytochrome b5 reductase.</title>
        <authorList>
            <person name="Kubota S."/>
            <person name="Yoshida Y."/>
            <person name="Kumaoka H."/>
        </authorList>
    </citation>
    <scope>FUNCTION</scope>
    <scope>CATALYTIC ACTIVITY</scope>
    <scope>BIOPHYSICOCHEMICAL PROPERTIES</scope>
    <scope>ACTIVITY REGULATION</scope>
    <scope>SUBUNIT</scope>
</reference>
<reference key="5">
    <citation type="journal article" date="1984" name="Biochimie">
        <title>Influence of oxygen on the microsomal electron transport system in Saccharomyces cerevisiae.</title>
        <authorList>
            <person name="Bertrand J.-C."/>
            <person name="Mattei G."/>
            <person name="Parra C."/>
            <person name="Giordani R."/>
            <person name="Gilewicz M."/>
        </authorList>
    </citation>
    <scope>INDUCTION</scope>
    <scope>ACTIVITY REGULATION</scope>
</reference>
<reference key="6">
    <citation type="journal article" date="1999" name="FEBS Lett.">
        <title>Biodiversity of the P450 catalytic cycle: yeast cytochrome b5/NADH cytochrome b5 reductase complex efficiently drives the entire sterol 14-demethylation (CYP51) reaction.</title>
        <authorList>
            <person name="Lamb D.C."/>
            <person name="Kelly D.E."/>
            <person name="Manning N.J."/>
            <person name="Kaderbhai M.A."/>
            <person name="Kelly S.L."/>
        </authorList>
    </citation>
    <scope>FUNCTION</scope>
</reference>
<reference key="7">
    <citation type="journal article" date="2003" name="Nature">
        <title>Sequencing and comparison of yeast species to identify genes and regulatory elements.</title>
        <authorList>
            <person name="Kellis M."/>
            <person name="Patterson N."/>
            <person name="Endrizzi M."/>
            <person name="Birren B.W."/>
            <person name="Lander E.S."/>
        </authorList>
    </citation>
    <scope>IDENTIFICATION OF PROBABLE INITIATION SITE</scope>
</reference>
<reference key="8">
    <citation type="journal article" date="2003" name="Nature">
        <title>Global analysis of protein localization in budding yeast.</title>
        <authorList>
            <person name="Huh W.-K."/>
            <person name="Falvo J.V."/>
            <person name="Gerke L.C."/>
            <person name="Carroll A.S."/>
            <person name="Howson R.W."/>
            <person name="Weissman J.S."/>
            <person name="O'Shea E.K."/>
        </authorList>
    </citation>
    <scope>SUBCELLULAR LOCATION [LARGE SCALE ANALYSIS]</scope>
</reference>
<reference key="9">
    <citation type="journal article" date="2003" name="Nature">
        <title>Global analysis of protein expression in yeast.</title>
        <authorList>
            <person name="Ghaemmaghami S."/>
            <person name="Huh W.-K."/>
            <person name="Bower K."/>
            <person name="Howson R.W."/>
            <person name="Belle A."/>
            <person name="Dephoure N."/>
            <person name="O'Shea E.K."/>
            <person name="Weissman J.S."/>
        </authorList>
    </citation>
    <scope>LEVEL OF PROTEIN EXPRESSION [LARGE SCALE ANALYSIS]</scope>
</reference>
<reference key="10">
    <citation type="journal article" date="2005" name="Nucleic Acids Res.">
        <title>Mapping of transcription start sites in Saccharomyces cerevisiae using 5' SAGE.</title>
        <authorList>
            <person name="Zhang Z."/>
            <person name="Dietrich F.S."/>
        </authorList>
    </citation>
    <scope>IDENTIFICATION OF PROBABLE INITIATION SITE</scope>
</reference>
<reference key="11">
    <citation type="journal article" date="2006" name="Mol. Biol. Cell">
        <title>Proteomic analysis of the yeast mitochondrial outer membrane reveals accumulation of a subclass of preproteins.</title>
        <authorList>
            <person name="Zahedi R.P."/>
            <person name="Sickmann A."/>
            <person name="Boehm A.M."/>
            <person name="Winkler C."/>
            <person name="Zufall N."/>
            <person name="Schoenfisch B."/>
            <person name="Guiard B."/>
            <person name="Pfanner N."/>
            <person name="Meisinger C."/>
        </authorList>
    </citation>
    <scope>SUBCELLULAR LOCATION</scope>
    <scope>IDENTIFICATION BY MASS SPECTROMETRY</scope>
</reference>
<reference key="12">
    <citation type="journal article" date="2007" name="J. Cell Sci.">
        <title>Proteins involved in sterol synthesis interact with Ste20 and regulate cell polarity.</title>
        <authorList>
            <person name="Tiedje C."/>
            <person name="Holland D.G."/>
            <person name="Just U."/>
            <person name="Hofken T."/>
        </authorList>
    </citation>
    <scope>FUNCTION</scope>
    <scope>INTERACTION WITH STE20</scope>
</reference>
<reference key="13">
    <citation type="journal article" date="2016" name="Nat. Chem. Biol.">
        <title>Cbr1 is a Dph3 reductase required for the tRNA wobble uridine modification.</title>
        <authorList>
            <person name="Lin Z."/>
            <person name="Dong M."/>
            <person name="Zhang Y."/>
            <person name="Lee E.A."/>
            <person name="Lin H."/>
        </authorList>
    </citation>
    <scope>FUNCTION</scope>
    <scope>IDENTIFICATION IN THE 2-(3-AMINO-3-CARBOXYPROPYL)HISTIDINE SYNTHASE COMPLEX</scope>
    <scope>INTERACTION WITH KTI11</scope>
    <scope>DISRUPTION PHENOTYPE</scope>
</reference>
<reference key="14">
    <citation type="journal article" date="2019" name="J. Biol. Inorg. Chem.">
        <title>The asymmetric function of Dph1-Dph2 heterodimer in diphthamide biosynthesis.</title>
        <authorList>
            <person name="Dong M."/>
            <person name="Dando E.E."/>
            <person name="Kotliar I."/>
            <person name="Su X."/>
            <person name="Dzikovski B."/>
            <person name="Freed J.H."/>
            <person name="Lin H."/>
        </authorList>
    </citation>
    <scope>FUNCTION</scope>
    <scope>CATALYTIC ACTIVITY</scope>
</reference>
<reference key="15">
    <citation type="journal article" date="2021" name="J. Am. Chem. Soc.">
        <title>Dph3 Enables Aerobic Diphthamide Biosynthesis by Donating One Iron Atom to Transform a [3Fe-4S] to a [4Fe-4S] Cluster in Dph1-Dph2.</title>
        <authorList>
            <person name="Zhang Y."/>
            <person name="Su D."/>
            <person name="Dzikovski B."/>
            <person name="Majer S.H."/>
            <person name="Coleman R."/>
            <person name="Chandrasekaran S."/>
            <person name="Fenwick M.K."/>
            <person name="Crane B.R."/>
            <person name="Lancaster K.M."/>
            <person name="Freed J.H."/>
            <person name="Lin H."/>
        </authorList>
    </citation>
    <scope>FUNCTION</scope>
    <scope>CATALYTIC ACTIVITY</scope>
    <scope>PATHWAY</scope>
</reference>
<keyword id="KW-0002">3D-structure</keyword>
<keyword id="KW-0274">FAD</keyword>
<keyword id="KW-0285">Flavoprotein</keyword>
<keyword id="KW-0472">Membrane</keyword>
<keyword id="KW-0496">Mitochondrion</keyword>
<keyword id="KW-1000">Mitochondrion outer membrane</keyword>
<keyword id="KW-0520">NAD</keyword>
<keyword id="KW-0560">Oxidoreductase</keyword>
<keyword id="KW-1185">Reference proteome</keyword>
<keyword id="KW-0808">Transferase</keyword>
<keyword id="KW-0812">Transmembrane</keyword>
<keyword id="KW-1133">Transmembrane helix</keyword>
<accession>P38626</accession>
<accession>D6VVN9</accession>
<protein>
    <recommendedName>
        <fullName evidence="13">NADH-cytochrome b5 reductase 1</fullName>
        <ecNumber evidence="6">1.6.2.2</ecNumber>
    </recommendedName>
    <alternativeName>
        <fullName evidence="13">Microsomal cytochrome b reductase</fullName>
    </alternativeName>
    <alternativeName>
        <fullName evidence="13">P35</fullName>
    </alternativeName>
</protein>
<dbReference type="EC" id="1.6.2.2" evidence="6"/>
<dbReference type="EMBL" id="Z28365">
    <property type="protein sequence ID" value="CAA82214.1"/>
    <property type="status" value="ALT_INIT"/>
    <property type="molecule type" value="Genomic_DNA"/>
</dbReference>
<dbReference type="EMBL" id="Z46861">
    <property type="protein sequence ID" value="CAA86908.1"/>
    <property type="status" value="ALT_INIT"/>
    <property type="molecule type" value="Genomic_DNA"/>
</dbReference>
<dbReference type="EMBL" id="BK006942">
    <property type="protein sequence ID" value="DAA08505.1"/>
    <property type="molecule type" value="Genomic_DNA"/>
</dbReference>
<dbReference type="PIR" id="S49935">
    <property type="entry name" value="S49935"/>
</dbReference>
<dbReference type="RefSeq" id="NP_012221.2">
    <property type="nucleotide sequence ID" value="NM_001179393.1"/>
</dbReference>
<dbReference type="PDB" id="7ROM">
    <property type="method" value="X-ray"/>
    <property type="resolution" value="1.65 A"/>
    <property type="chains" value="A=28-284"/>
</dbReference>
<dbReference type="PDBsum" id="7ROM"/>
<dbReference type="SMR" id="P38626"/>
<dbReference type="BioGRID" id="34947">
    <property type="interactions" value="147"/>
</dbReference>
<dbReference type="FunCoup" id="P38626">
    <property type="interactions" value="321"/>
</dbReference>
<dbReference type="IntAct" id="P38626">
    <property type="interactions" value="18"/>
</dbReference>
<dbReference type="MINT" id="P38626"/>
<dbReference type="STRING" id="4932.YIL043C"/>
<dbReference type="iPTMnet" id="P38626"/>
<dbReference type="PaxDb" id="4932-YIL043C"/>
<dbReference type="PeptideAtlas" id="P38626"/>
<dbReference type="EnsemblFungi" id="YIL043C_mRNA">
    <property type="protein sequence ID" value="YIL043C"/>
    <property type="gene ID" value="YIL043C"/>
</dbReference>
<dbReference type="GeneID" id="854768"/>
<dbReference type="KEGG" id="sce:YIL043C"/>
<dbReference type="AGR" id="SGD:S000001305"/>
<dbReference type="SGD" id="S000001305">
    <property type="gene designation" value="CBR1"/>
</dbReference>
<dbReference type="VEuPathDB" id="FungiDB:YIL043C"/>
<dbReference type="eggNOG" id="KOG0534">
    <property type="taxonomic scope" value="Eukaryota"/>
</dbReference>
<dbReference type="HOGENOM" id="CLU_003827_9_0_1"/>
<dbReference type="InParanoid" id="P38626"/>
<dbReference type="OMA" id="VQIFMCG"/>
<dbReference type="OrthoDB" id="432685at2759"/>
<dbReference type="BioCyc" id="MetaCyc:YIL043C-MONOMER"/>
<dbReference type="BioCyc" id="YEAST:YIL043C-MONOMER"/>
<dbReference type="Reactome" id="R-SCE-114608">
    <property type="pathway name" value="Platelet degranulation"/>
</dbReference>
<dbReference type="Reactome" id="R-SCE-196836">
    <property type="pathway name" value="Vitamin C (ascorbate) metabolism"/>
</dbReference>
<dbReference type="Reactome" id="R-SCE-6798695">
    <property type="pathway name" value="Neutrophil degranulation"/>
</dbReference>
<dbReference type="SABIO-RK" id="P38626"/>
<dbReference type="UniPathway" id="UPA00559"/>
<dbReference type="BioGRID-ORCS" id="854768">
    <property type="hits" value="1 hit in 10 CRISPR screens"/>
</dbReference>
<dbReference type="PRO" id="PR:P38626"/>
<dbReference type="Proteomes" id="UP000002311">
    <property type="component" value="Chromosome IX"/>
</dbReference>
<dbReference type="RNAct" id="P38626">
    <property type="molecule type" value="protein"/>
</dbReference>
<dbReference type="GO" id="GO:0005741">
    <property type="term" value="C:mitochondrial outer membrane"/>
    <property type="evidence" value="ECO:0007005"/>
    <property type="project" value="SGD"/>
</dbReference>
<dbReference type="GO" id="GO:0005739">
    <property type="term" value="C:mitochondrion"/>
    <property type="evidence" value="ECO:0007005"/>
    <property type="project" value="SGD"/>
</dbReference>
<dbReference type="GO" id="GO:0005634">
    <property type="term" value="C:nucleus"/>
    <property type="evidence" value="ECO:0007005"/>
    <property type="project" value="SGD"/>
</dbReference>
<dbReference type="GO" id="GO:0005886">
    <property type="term" value="C:plasma membrane"/>
    <property type="evidence" value="ECO:0000318"/>
    <property type="project" value="GO_Central"/>
</dbReference>
<dbReference type="GO" id="GO:0090560">
    <property type="term" value="F:2-(3-amino-3-carboxypropyl)histidine synthase activity"/>
    <property type="evidence" value="ECO:0000314"/>
    <property type="project" value="UniProtKB"/>
</dbReference>
<dbReference type="GO" id="GO:0004128">
    <property type="term" value="F:cytochrome-b5 reductase activity, acting on NAD(P)H"/>
    <property type="evidence" value="ECO:0000314"/>
    <property type="project" value="UniProtKB"/>
</dbReference>
<dbReference type="GO" id="GO:0003954">
    <property type="term" value="F:NADH dehydrogenase activity"/>
    <property type="evidence" value="ECO:0000314"/>
    <property type="project" value="CACAO"/>
</dbReference>
<dbReference type="GO" id="GO:0017183">
    <property type="term" value="P:protein histidyl modification to diphthamide"/>
    <property type="evidence" value="ECO:0000314"/>
    <property type="project" value="UniProtKB"/>
</dbReference>
<dbReference type="GO" id="GO:0002926">
    <property type="term" value="P:tRNA wobble base 5-methoxycarbonylmethyl-2-thiouridinylation"/>
    <property type="evidence" value="ECO:0000315"/>
    <property type="project" value="UniProtKB"/>
</dbReference>
<dbReference type="GO" id="GO:0002098">
    <property type="term" value="P:tRNA wobble uridine modification"/>
    <property type="evidence" value="ECO:0000315"/>
    <property type="project" value="SGD"/>
</dbReference>
<dbReference type="CDD" id="cd06183">
    <property type="entry name" value="cyt_b5_reduct_like"/>
    <property type="match status" value="1"/>
</dbReference>
<dbReference type="FunFam" id="2.40.30.10:FF:000032">
    <property type="entry name" value="NADH-cytochrome b5 reductase"/>
    <property type="match status" value="1"/>
</dbReference>
<dbReference type="FunFam" id="3.40.50.80:FF:000009">
    <property type="entry name" value="NADH-cytochrome b5 reductase"/>
    <property type="match status" value="1"/>
</dbReference>
<dbReference type="Gene3D" id="3.40.50.80">
    <property type="entry name" value="Nucleotide-binding domain of ferredoxin-NADP reductase (FNR) module"/>
    <property type="match status" value="1"/>
</dbReference>
<dbReference type="Gene3D" id="2.40.30.10">
    <property type="entry name" value="Translation factors"/>
    <property type="match status" value="1"/>
</dbReference>
<dbReference type="InterPro" id="IPR001834">
    <property type="entry name" value="CBR-like"/>
</dbReference>
<dbReference type="InterPro" id="IPR008333">
    <property type="entry name" value="Cbr1-like_FAD-bd_dom"/>
</dbReference>
<dbReference type="InterPro" id="IPR017927">
    <property type="entry name" value="FAD-bd_FR_type"/>
</dbReference>
<dbReference type="InterPro" id="IPR001709">
    <property type="entry name" value="Flavoprot_Pyr_Nucl_cyt_Rdtase"/>
</dbReference>
<dbReference type="InterPro" id="IPR039261">
    <property type="entry name" value="FNR_nucleotide-bd"/>
</dbReference>
<dbReference type="InterPro" id="IPR001433">
    <property type="entry name" value="OxRdtase_FAD/NAD-bd"/>
</dbReference>
<dbReference type="InterPro" id="IPR017938">
    <property type="entry name" value="Riboflavin_synthase-like_b-brl"/>
</dbReference>
<dbReference type="PANTHER" id="PTHR19370">
    <property type="entry name" value="NADH-CYTOCHROME B5 REDUCTASE"/>
    <property type="match status" value="1"/>
</dbReference>
<dbReference type="PANTHER" id="PTHR19370:SF184">
    <property type="entry name" value="NADH-CYTOCHROME B5 REDUCTASE-LIKE"/>
    <property type="match status" value="1"/>
</dbReference>
<dbReference type="Pfam" id="PF00970">
    <property type="entry name" value="FAD_binding_6"/>
    <property type="match status" value="1"/>
</dbReference>
<dbReference type="Pfam" id="PF00175">
    <property type="entry name" value="NAD_binding_1"/>
    <property type="match status" value="1"/>
</dbReference>
<dbReference type="PRINTS" id="PR00406">
    <property type="entry name" value="CYTB5RDTASE"/>
</dbReference>
<dbReference type="PRINTS" id="PR00371">
    <property type="entry name" value="FPNCR"/>
</dbReference>
<dbReference type="SUPFAM" id="SSF52343">
    <property type="entry name" value="Ferredoxin reductase-like, C-terminal NADP-linked domain"/>
    <property type="match status" value="1"/>
</dbReference>
<dbReference type="SUPFAM" id="SSF63380">
    <property type="entry name" value="Riboflavin synthase domain-like"/>
    <property type="match status" value="1"/>
</dbReference>
<dbReference type="PROSITE" id="PS51384">
    <property type="entry name" value="FAD_FR"/>
    <property type="match status" value="1"/>
</dbReference>
<organism>
    <name type="scientific">Saccharomyces cerevisiae (strain ATCC 204508 / S288c)</name>
    <name type="common">Baker's yeast</name>
    <dbReference type="NCBI Taxonomy" id="559292"/>
    <lineage>
        <taxon>Eukaryota</taxon>
        <taxon>Fungi</taxon>
        <taxon>Dikarya</taxon>
        <taxon>Ascomycota</taxon>
        <taxon>Saccharomycotina</taxon>
        <taxon>Saccharomycetes</taxon>
        <taxon>Saccharomycetales</taxon>
        <taxon>Saccharomycetaceae</taxon>
        <taxon>Saccharomyces</taxon>
    </lineage>
</organism>
<gene>
    <name type="primary">CBR1</name>
    <name type="synonym">CBR</name>
    <name type="synonym">CBR5</name>
    <name type="ordered locus">YIL043C</name>
</gene>